<proteinExistence type="evidence at protein level"/>
<evidence type="ECO:0000255" key="1">
    <source>
        <dbReference type="HAMAP-Rule" id="MF_01326"/>
    </source>
</evidence>
<evidence type="ECO:0000305" key="2"/>
<name>RL24_GEOSE</name>
<reference key="1">
    <citation type="journal article" date="1985" name="Eur. J. Biochem.">
        <title>The complete primary structure of ribosomal proteins L1, L14, L15, L23, L24 and L29 from Bacillus stearothermophilus.</title>
        <authorList>
            <person name="Kimura M."/>
            <person name="Kimura J."/>
            <person name="Ashman K."/>
        </authorList>
    </citation>
    <scope>PROTEIN SEQUENCE</scope>
</reference>
<gene>
    <name evidence="1" type="primary">rplX</name>
</gene>
<protein>
    <recommendedName>
        <fullName evidence="1">Large ribosomal subunit protein uL24</fullName>
    </recommendedName>
    <alternativeName>
        <fullName evidence="2">50S ribosomal protein L24</fullName>
    </alternativeName>
</protein>
<keyword id="KW-0903">Direct protein sequencing</keyword>
<keyword id="KW-0687">Ribonucleoprotein</keyword>
<keyword id="KW-0689">Ribosomal protein</keyword>
<keyword id="KW-0694">RNA-binding</keyword>
<keyword id="KW-0699">rRNA-binding</keyword>
<comment type="function">
    <text evidence="1">One of two assembly initiator proteins, it binds directly to the 5'-end of the 23S rRNA, where it nucleates assembly of the 50S subunit.</text>
</comment>
<comment type="function">
    <text evidence="1">One of the proteins that surrounds the polypeptide exit tunnel on the outside of the subunit.</text>
</comment>
<comment type="subunit">
    <text>Part of the 50S ribosomal subunit.</text>
</comment>
<comment type="similarity">
    <text evidence="1">Belongs to the universal ribosomal protein uL24 family.</text>
</comment>
<feature type="chain" id="PRO_0000130622" description="Large ribosomal subunit protein uL24">
    <location>
        <begin position="1"/>
        <end position="103"/>
    </location>
</feature>
<accession>P04455</accession>
<organism>
    <name type="scientific">Geobacillus stearothermophilus</name>
    <name type="common">Bacillus stearothermophilus</name>
    <dbReference type="NCBI Taxonomy" id="1422"/>
    <lineage>
        <taxon>Bacteria</taxon>
        <taxon>Bacillati</taxon>
        <taxon>Bacillota</taxon>
        <taxon>Bacilli</taxon>
        <taxon>Bacillales</taxon>
        <taxon>Anoxybacillaceae</taxon>
        <taxon>Geobacillus</taxon>
    </lineage>
</organism>
<dbReference type="PIR" id="A02819">
    <property type="entry name" value="R5BS24"/>
</dbReference>
<dbReference type="RefSeq" id="WP_011229631.1">
    <property type="nucleotide sequence ID" value="NZ_RCTK01000011.1"/>
</dbReference>
<dbReference type="SMR" id="P04455"/>
<dbReference type="GeneID" id="89612889"/>
<dbReference type="OrthoDB" id="9807419at2"/>
<dbReference type="GO" id="GO:1990904">
    <property type="term" value="C:ribonucleoprotein complex"/>
    <property type="evidence" value="ECO:0007669"/>
    <property type="project" value="UniProtKB-KW"/>
</dbReference>
<dbReference type="GO" id="GO:0005840">
    <property type="term" value="C:ribosome"/>
    <property type="evidence" value="ECO:0007669"/>
    <property type="project" value="UniProtKB-KW"/>
</dbReference>
<dbReference type="GO" id="GO:0019843">
    <property type="term" value="F:rRNA binding"/>
    <property type="evidence" value="ECO:0007669"/>
    <property type="project" value="UniProtKB-UniRule"/>
</dbReference>
<dbReference type="GO" id="GO:0003735">
    <property type="term" value="F:structural constituent of ribosome"/>
    <property type="evidence" value="ECO:0007669"/>
    <property type="project" value="InterPro"/>
</dbReference>
<dbReference type="GO" id="GO:0006412">
    <property type="term" value="P:translation"/>
    <property type="evidence" value="ECO:0007669"/>
    <property type="project" value="UniProtKB-UniRule"/>
</dbReference>
<dbReference type="CDD" id="cd06089">
    <property type="entry name" value="KOW_RPL26"/>
    <property type="match status" value="1"/>
</dbReference>
<dbReference type="FunFam" id="2.30.30.30:FF:000004">
    <property type="entry name" value="50S ribosomal protein L24"/>
    <property type="match status" value="1"/>
</dbReference>
<dbReference type="Gene3D" id="2.30.30.30">
    <property type="match status" value="1"/>
</dbReference>
<dbReference type="HAMAP" id="MF_01326_B">
    <property type="entry name" value="Ribosomal_uL24_B"/>
    <property type="match status" value="1"/>
</dbReference>
<dbReference type="InterPro" id="IPR005824">
    <property type="entry name" value="KOW"/>
</dbReference>
<dbReference type="InterPro" id="IPR014722">
    <property type="entry name" value="Rib_uL2_dom2"/>
</dbReference>
<dbReference type="InterPro" id="IPR003256">
    <property type="entry name" value="Ribosomal_uL24"/>
</dbReference>
<dbReference type="InterPro" id="IPR005825">
    <property type="entry name" value="Ribosomal_uL24_CS"/>
</dbReference>
<dbReference type="InterPro" id="IPR041988">
    <property type="entry name" value="Ribosomal_uL24_KOW"/>
</dbReference>
<dbReference type="InterPro" id="IPR008991">
    <property type="entry name" value="Translation_prot_SH3-like_sf"/>
</dbReference>
<dbReference type="NCBIfam" id="TIGR01079">
    <property type="entry name" value="rplX_bact"/>
    <property type="match status" value="1"/>
</dbReference>
<dbReference type="PANTHER" id="PTHR12903">
    <property type="entry name" value="MITOCHONDRIAL RIBOSOMAL PROTEIN L24"/>
    <property type="match status" value="1"/>
</dbReference>
<dbReference type="Pfam" id="PF00467">
    <property type="entry name" value="KOW"/>
    <property type="match status" value="1"/>
</dbReference>
<dbReference type="Pfam" id="PF17136">
    <property type="entry name" value="ribosomal_L24"/>
    <property type="match status" value="1"/>
</dbReference>
<dbReference type="SMART" id="SM00739">
    <property type="entry name" value="KOW"/>
    <property type="match status" value="1"/>
</dbReference>
<dbReference type="SUPFAM" id="SSF50104">
    <property type="entry name" value="Translation proteins SH3-like domain"/>
    <property type="match status" value="1"/>
</dbReference>
<dbReference type="PROSITE" id="PS01108">
    <property type="entry name" value="RIBOSOMAL_L24"/>
    <property type="match status" value="1"/>
</dbReference>
<sequence length="103" mass="11218">MHVKKGDKVQVISGKDKGKQGVILAAFPKKNRVIVEGVNIVKKHAKPSQANPQGGIIEKEAPIHVSKVMPLDPKTGEPTRIGYKIVDGKKVRYAKKSGEILDK</sequence>